<feature type="chain" id="PRO_0000325077" description="Photosystem I assembly protein Ycf3">
    <location>
        <begin position="1"/>
        <end position="168"/>
    </location>
</feature>
<feature type="repeat" description="TPR 1">
    <location>
        <begin position="29"/>
        <end position="62"/>
    </location>
</feature>
<feature type="repeat" description="TPR 2">
    <location>
        <begin position="66"/>
        <end position="99"/>
    </location>
</feature>
<feature type="repeat" description="TPR 3">
    <location>
        <begin position="117"/>
        <end position="150"/>
    </location>
</feature>
<gene>
    <name evidence="1" type="primary">ycf3</name>
</gene>
<sequence length="168" mass="19198">MGNFIDKTFTVIADILLKVLPASKQEKEAFSYYRAGMSAQSKGRYAEALQNYYEALQVEEDPYDRSYTLYNIGLIYGNTGKYTQALEFYHQALSLNANLPQALNNIAVIYHSQALRAQSLEEDEYIELSKELFDKAAEYWIQALKLAPDNYPGARNWLKVTGRLSDNN</sequence>
<evidence type="ECO:0000255" key="1">
    <source>
        <dbReference type="HAMAP-Rule" id="MF_00439"/>
    </source>
</evidence>
<proteinExistence type="inferred from homology"/>
<name>YCF3_PHATC</name>
<accession>A0T0D3</accession>
<protein>
    <recommendedName>
        <fullName evidence="1">Photosystem I assembly protein Ycf3</fullName>
    </recommendedName>
</protein>
<organism>
    <name type="scientific">Phaeodactylum tricornutum (strain CCAP 1055/1)</name>
    <dbReference type="NCBI Taxonomy" id="556484"/>
    <lineage>
        <taxon>Eukaryota</taxon>
        <taxon>Sar</taxon>
        <taxon>Stramenopiles</taxon>
        <taxon>Ochrophyta</taxon>
        <taxon>Bacillariophyta</taxon>
        <taxon>Bacillariophyceae</taxon>
        <taxon>Bacillariophycidae</taxon>
        <taxon>Naviculales</taxon>
        <taxon>Phaeodactylaceae</taxon>
        <taxon>Phaeodactylum</taxon>
    </lineage>
</organism>
<comment type="function">
    <text evidence="1">Essential for the assembly of the photosystem I (PSI) complex. May act as a chaperone-like factor to guide the assembly of the PSI subunits.</text>
</comment>
<comment type="subcellular location">
    <subcellularLocation>
        <location evidence="1">Plastid</location>
        <location evidence="1">Chloroplast thylakoid membrane</location>
        <topology evidence="1">Peripheral membrane protein</topology>
    </subcellularLocation>
</comment>
<comment type="similarity">
    <text evidence="1">Belongs to the Ycf3 family.</text>
</comment>
<reference key="1">
    <citation type="journal article" date="2007" name="Mol. Genet. Genomics">
        <title>Chloroplast genomes of the diatoms Phaeodactylum tricornutum and Thalassiosira pseudonana: comparison with other plastid genomes of the red lineage.</title>
        <authorList>
            <person name="Oudot-Le Secq M.-P."/>
            <person name="Grimwood J."/>
            <person name="Shapiro H."/>
            <person name="Armbrust E.V."/>
            <person name="Bowler C."/>
            <person name="Green B.R."/>
        </authorList>
    </citation>
    <scope>NUCLEOTIDE SEQUENCE [LARGE SCALE GENOMIC DNA]</scope>
    <source>
        <strain>CCAP 1055/1</strain>
    </source>
</reference>
<geneLocation type="chloroplast"/>
<keyword id="KW-0150">Chloroplast</keyword>
<keyword id="KW-0472">Membrane</keyword>
<keyword id="KW-0602">Photosynthesis</keyword>
<keyword id="KW-0934">Plastid</keyword>
<keyword id="KW-1185">Reference proteome</keyword>
<keyword id="KW-0677">Repeat</keyword>
<keyword id="KW-0793">Thylakoid</keyword>
<keyword id="KW-0802">TPR repeat</keyword>
<dbReference type="EMBL" id="EF067920">
    <property type="protein sequence ID" value="ABK20631.1"/>
    <property type="molecule type" value="Genomic_DNA"/>
</dbReference>
<dbReference type="RefSeq" id="YP_874408.1">
    <property type="nucleotide sequence ID" value="NC_008588.1"/>
</dbReference>
<dbReference type="SMR" id="A0T0D3"/>
<dbReference type="STRING" id="556484.A0T0D3"/>
<dbReference type="GeneID" id="4524583"/>
<dbReference type="InParanoid" id="A0T0D3"/>
<dbReference type="Proteomes" id="UP000000759">
    <property type="component" value="Chloroplast"/>
</dbReference>
<dbReference type="GO" id="GO:0009535">
    <property type="term" value="C:chloroplast thylakoid membrane"/>
    <property type="evidence" value="ECO:0007669"/>
    <property type="project" value="UniProtKB-SubCell"/>
</dbReference>
<dbReference type="GO" id="GO:0015979">
    <property type="term" value="P:photosynthesis"/>
    <property type="evidence" value="ECO:0007669"/>
    <property type="project" value="UniProtKB-UniRule"/>
</dbReference>
<dbReference type="Gene3D" id="1.25.40.10">
    <property type="entry name" value="Tetratricopeptide repeat domain"/>
    <property type="match status" value="1"/>
</dbReference>
<dbReference type="HAMAP" id="MF_00439">
    <property type="entry name" value="Ycf3"/>
    <property type="match status" value="1"/>
</dbReference>
<dbReference type="InterPro" id="IPR022818">
    <property type="entry name" value="PSI_Ycf3_assembly"/>
</dbReference>
<dbReference type="InterPro" id="IPR011990">
    <property type="entry name" value="TPR-like_helical_dom_sf"/>
</dbReference>
<dbReference type="InterPro" id="IPR019734">
    <property type="entry name" value="TPR_rpt"/>
</dbReference>
<dbReference type="InterPro" id="IPR051685">
    <property type="entry name" value="Ycf3/AcsC/BcsC/TPR_MFPF"/>
</dbReference>
<dbReference type="NCBIfam" id="NF002725">
    <property type="entry name" value="PRK02603.1"/>
    <property type="match status" value="1"/>
</dbReference>
<dbReference type="PANTHER" id="PTHR44943">
    <property type="entry name" value="CELLULOSE SYNTHASE OPERON PROTEIN C"/>
    <property type="match status" value="1"/>
</dbReference>
<dbReference type="PANTHER" id="PTHR44943:SF8">
    <property type="entry name" value="TPR REPEAT-CONTAINING PROTEIN MJ0263"/>
    <property type="match status" value="1"/>
</dbReference>
<dbReference type="Pfam" id="PF00515">
    <property type="entry name" value="TPR_1"/>
    <property type="match status" value="1"/>
</dbReference>
<dbReference type="Pfam" id="PF13181">
    <property type="entry name" value="TPR_8"/>
    <property type="match status" value="1"/>
</dbReference>
<dbReference type="SMART" id="SM00028">
    <property type="entry name" value="TPR"/>
    <property type="match status" value="3"/>
</dbReference>
<dbReference type="SUPFAM" id="SSF48452">
    <property type="entry name" value="TPR-like"/>
    <property type="match status" value="1"/>
</dbReference>
<dbReference type="PROSITE" id="PS50005">
    <property type="entry name" value="TPR"/>
    <property type="match status" value="3"/>
</dbReference>
<dbReference type="PROSITE" id="PS50293">
    <property type="entry name" value="TPR_REGION"/>
    <property type="match status" value="2"/>
</dbReference>